<dbReference type="EC" id="1.11.1.20" evidence="1"/>
<dbReference type="EMBL" id="BT047738">
    <property type="protein sequence ID" value="ACI67539.1"/>
    <property type="molecule type" value="mRNA"/>
</dbReference>
<dbReference type="RefSeq" id="XP_014021781.1">
    <property type="nucleotide sequence ID" value="XM_014166306.2"/>
</dbReference>
<dbReference type="SMR" id="B5X9L9"/>
<dbReference type="STRING" id="8030.ENSSSAP00000100195"/>
<dbReference type="PaxDb" id="8030-ENSSSAP00000100195"/>
<dbReference type="Ensembl" id="ENSSSAT00070015809">
    <property type="protein sequence ID" value="ENSSSAP00070015016"/>
    <property type="gene ID" value="ENSSSAG00070010059"/>
</dbReference>
<dbReference type="GeneID" id="106582827"/>
<dbReference type="KEGG" id="sasa:106582827"/>
<dbReference type="CTD" id="127281"/>
<dbReference type="OrthoDB" id="506335at7898"/>
<dbReference type="Proteomes" id="UP000087266">
    <property type="component" value="Chromosome ssa22"/>
</dbReference>
<dbReference type="Bgee" id="ENSSSAG00000074439">
    <property type="expression patterns" value="Expressed in midgut and 23 other cell types or tissues"/>
</dbReference>
<dbReference type="GO" id="GO:0005829">
    <property type="term" value="C:cytosol"/>
    <property type="evidence" value="ECO:0007669"/>
    <property type="project" value="UniProtKB-SubCell"/>
</dbReference>
<dbReference type="GO" id="GO:0016616">
    <property type="term" value="F:oxidoreductase activity, acting on the CH-OH group of donors, NAD or NADP as acceptor"/>
    <property type="evidence" value="ECO:0000250"/>
    <property type="project" value="UniProtKB"/>
</dbReference>
<dbReference type="GO" id="GO:0047017">
    <property type="term" value="F:prostaglandin F synthase activity"/>
    <property type="evidence" value="ECO:0007669"/>
    <property type="project" value="TreeGrafter"/>
</dbReference>
<dbReference type="GO" id="GO:0001516">
    <property type="term" value="P:prostaglandin biosynthetic process"/>
    <property type="evidence" value="ECO:0000250"/>
    <property type="project" value="UniProtKB"/>
</dbReference>
<dbReference type="CDD" id="cd02970">
    <property type="entry name" value="PRX_like2"/>
    <property type="match status" value="1"/>
</dbReference>
<dbReference type="FunFam" id="3.40.30.10:FF:000243">
    <property type="entry name" value="Prostamide/prostaglandin F synthase"/>
    <property type="match status" value="1"/>
</dbReference>
<dbReference type="Gene3D" id="3.40.30.10">
    <property type="entry name" value="Glutaredoxin"/>
    <property type="match status" value="1"/>
</dbReference>
<dbReference type="InterPro" id="IPR032801">
    <property type="entry name" value="PXL2A/B/C"/>
</dbReference>
<dbReference type="InterPro" id="IPR036249">
    <property type="entry name" value="Thioredoxin-like_sf"/>
</dbReference>
<dbReference type="InterPro" id="IPR013766">
    <property type="entry name" value="Thioredoxin_domain"/>
</dbReference>
<dbReference type="PANTHER" id="PTHR28630">
    <property type="match status" value="1"/>
</dbReference>
<dbReference type="PANTHER" id="PTHR28630:SF28">
    <property type="entry name" value="PROSTAMIDE_PROSTAGLANDIN F SYNTHASE"/>
    <property type="match status" value="1"/>
</dbReference>
<dbReference type="Pfam" id="PF13911">
    <property type="entry name" value="AhpC-TSA_2"/>
    <property type="match status" value="1"/>
</dbReference>
<dbReference type="SUPFAM" id="SSF52833">
    <property type="entry name" value="Thioredoxin-like"/>
    <property type="match status" value="1"/>
</dbReference>
<dbReference type="PROSITE" id="PS51352">
    <property type="entry name" value="THIOREDOXIN_2"/>
    <property type="match status" value="1"/>
</dbReference>
<gene>
    <name type="primary">prxl2b</name>
    <name type="synonym">fam213b</name>
</gene>
<feature type="chain" id="PRO_0000406971" description="Prostamide/prostaglandin F synthase">
    <location>
        <begin position="1"/>
        <end position="200"/>
    </location>
</feature>
<reference key="1">
    <citation type="journal article" date="2010" name="BMC Genomics">
        <title>Salmo salar and Esox lucius full-length cDNA sequences reveal changes in evolutionary pressures on a post-tetraploidization genome.</title>
        <authorList>
            <person name="Leong J.S."/>
            <person name="Jantzen S.G."/>
            <person name="von Schalburg K.R."/>
            <person name="Cooper G.A."/>
            <person name="Messmer A.M."/>
            <person name="Liao N.Y."/>
            <person name="Munro S."/>
            <person name="Moore R."/>
            <person name="Holt R.A."/>
            <person name="Jones S.J."/>
            <person name="Davidson W.S."/>
            <person name="Koop B.F."/>
        </authorList>
    </citation>
    <scope>NUCLEOTIDE SEQUENCE [LARGE SCALE MRNA]</scope>
    <source>
        <tissue>Brain</tissue>
    </source>
</reference>
<organism>
    <name type="scientific">Salmo salar</name>
    <name type="common">Atlantic salmon</name>
    <dbReference type="NCBI Taxonomy" id="8030"/>
    <lineage>
        <taxon>Eukaryota</taxon>
        <taxon>Metazoa</taxon>
        <taxon>Chordata</taxon>
        <taxon>Craniata</taxon>
        <taxon>Vertebrata</taxon>
        <taxon>Euteleostomi</taxon>
        <taxon>Actinopterygii</taxon>
        <taxon>Neopterygii</taxon>
        <taxon>Teleostei</taxon>
        <taxon>Protacanthopterygii</taxon>
        <taxon>Salmoniformes</taxon>
        <taxon>Salmonidae</taxon>
        <taxon>Salmoninae</taxon>
        <taxon>Salmo</taxon>
    </lineage>
</organism>
<sequence length="200" mass="21861">MAKIELKPVGTNLLKSVSGESVELQSLWRDKPVVLFFLRRFGCQVCRWTAAEISKLEPDLTAHGIALVGIGPEETGLKEFKEGGFFKGDLYIDEKKQCYKDLGFKRYTALSVVPAALGKKIREVTTKAKAQGIQGNFTGDLLQSGGMLIVAKGGEKVLLHFVQDSPGDYVPLEDISKALDISANVQAGERPQCNDDVCTR</sequence>
<accession>B5X9L9</accession>
<name>PXL2B_SALSA</name>
<evidence type="ECO:0000250" key="1">
    <source>
        <dbReference type="UniProtKB" id="Q9DB60"/>
    </source>
</evidence>
<evidence type="ECO:0000305" key="2"/>
<comment type="function">
    <text evidence="1">Catalyzes the reduction of prostaglandin-ethanolamide H(2) (prostamide H(2)) to prostamide F(2alpha) with NADPH as proton donor. Also able to reduce prostaglandin H(2) to prostaglandin F(2alpha) (By similarity).</text>
</comment>
<comment type="catalytic activity">
    <reaction evidence="1">
        <text>prostaglandin H2 + [thioredoxin]-dithiol = prostaglandin F2alpha + [thioredoxin]-disulfide</text>
        <dbReference type="Rhea" id="RHEA:28214"/>
        <dbReference type="Rhea" id="RHEA-COMP:10698"/>
        <dbReference type="Rhea" id="RHEA-COMP:10700"/>
        <dbReference type="ChEBI" id="CHEBI:29950"/>
        <dbReference type="ChEBI" id="CHEBI:50058"/>
        <dbReference type="ChEBI" id="CHEBI:57404"/>
        <dbReference type="ChEBI" id="CHEBI:57405"/>
        <dbReference type="EC" id="1.11.1.20"/>
    </reaction>
</comment>
<comment type="catalytic activity">
    <reaction evidence="1">
        <text>prostamide F2alpha + [thioredoxin]-disulfide = prostamide H2 + [thioredoxin]-dithiol</text>
        <dbReference type="Rhea" id="RHEA:26373"/>
        <dbReference type="Rhea" id="RHEA-COMP:10698"/>
        <dbReference type="Rhea" id="RHEA-COMP:10700"/>
        <dbReference type="ChEBI" id="CHEBI:29950"/>
        <dbReference type="ChEBI" id="CHEBI:50058"/>
        <dbReference type="ChEBI" id="CHEBI:53081"/>
        <dbReference type="ChEBI" id="CHEBI:53082"/>
        <dbReference type="EC" id="1.11.1.20"/>
    </reaction>
</comment>
<comment type="subcellular location">
    <subcellularLocation>
        <location evidence="1">Cytoplasm</location>
        <location evidence="1">Cytosol</location>
    </subcellularLocation>
</comment>
<comment type="similarity">
    <text evidence="2">Belongs to the peroxiredoxin-like PRXL2 family. Prostamide/prostaglandin F synthase subfamily.</text>
</comment>
<protein>
    <recommendedName>
        <fullName>Prostamide/prostaglandin F synthase</fullName>
        <shortName>Prostamide/PG F synthase</shortName>
        <shortName>Prostamide/PGF synthase</shortName>
        <ecNumber evidence="1">1.11.1.20</ecNumber>
    </recommendedName>
    <alternativeName>
        <fullName>Peroxiredoxin-like 2B</fullName>
    </alternativeName>
</protein>
<keyword id="KW-0963">Cytoplasm</keyword>
<keyword id="KW-0275">Fatty acid biosynthesis</keyword>
<keyword id="KW-0276">Fatty acid metabolism</keyword>
<keyword id="KW-0444">Lipid biosynthesis</keyword>
<keyword id="KW-0443">Lipid metabolism</keyword>
<keyword id="KW-0521">NADP</keyword>
<keyword id="KW-0560">Oxidoreductase</keyword>
<keyword id="KW-0643">Prostaglandin biosynthesis</keyword>
<keyword id="KW-0644">Prostaglandin metabolism</keyword>
<keyword id="KW-1185">Reference proteome</keyword>
<proteinExistence type="evidence at transcript level"/>